<sequence length="397" mass="44935">MEVLYSISKTLKDARDKIVEGTLYSNVSDIIQQFNQIIVTMNGNEFQTGGIGTLPIRNWTFDFGLLGTTLLNLDANYVETARTTIEYFIDFIDNVCMDEMTRESQRNGIAPQSDALRKLSGIKFKRINFDNSSEYIENWNLQNRRQRTGFVFHKPNIFPYSASFTLNRSQPLHNDLMGTMWLNAGSEIQVAGFDYSCAINAPANTQQFEHIVQLRRALTTATITILPDAERFSFPRVINSADGATTWFFNPVILRPNNVEVEFLLNGQIINTYQARFGTIIARNFDTIRLSFQLMRPPNMTPAVNALFPQAQPFQHHATVGLTLRIDSAVCESVLADSNETMLANVTAVRQEYAVPVGPVFPPGMNWTELITNYSPSREDNLQRVFTVASIRSMLIK</sequence>
<protein>
    <recommendedName>
        <fullName evidence="1">Intermediate capsid protein VP6</fullName>
    </recommendedName>
</protein>
<comment type="function">
    <text evidence="1">Intermediate capsid protein that self assembles to form an icosahedral capsid with a T=13 symmetry, which consists of 230 trimers of VP6, with channels at each of its five-fold vertices. This capsid constitutes the middle concentric layer of the viral mature particle. The innermost VP2 capsid and the intermediate VP6 capsid remain intact following cell entry to protect the dsRNA from degradation and to prevent unfavorable antiviral responses in the host cell during all the replication cycle of the virus. Nascent transcripts are transcribed within the structural confines of this double-layered particle (DLP) and are extruded through the channels at the five-fold axes. VP6 is required for the transcription activity of the DLP.</text>
</comment>
<comment type="subunit">
    <text evidence="1">Homotrimer. Interacts with the inner capsid protein VP2. Interacts with the outer capsid glycoprotein VP7. Interacts with the outer capsid protein VP5*.</text>
</comment>
<comment type="subcellular location">
    <subcellularLocation>
        <location evidence="1">Virion</location>
    </subcellularLocation>
    <text evidence="1">Component of the intermediate capsid. Also found in spherical cytoplasmic structures, called virus factories, that appear early after infection and are the site of viral replication and packaging.</text>
</comment>
<comment type="PTM">
    <text evidence="1">The N-terminus is blocked.</text>
</comment>
<comment type="PTM">
    <text evidence="1">Sumoylated with SUMO1 and SUMO2. Sumoylation of viral proteins seems to have a positive role on viral replication.</text>
</comment>
<comment type="miscellaneous">
    <text evidence="1">The VP6 trimer contains a zinc ion located at the center of the molecule. The zinc ion is not essential for either trimerization or transcription activity of the DLP. Zinc-depleted VP6 has an increased sensitivity to proteases.</text>
</comment>
<comment type="similarity">
    <text evidence="1">Belongs to the rotavirus VP6 family.</text>
</comment>
<accession>P16592</accession>
<organism>
    <name type="scientific">Rotavirus A (strain RVA/Equine/United States/FI-14/1980/G3P4[12])</name>
    <name type="common">RV-A</name>
    <name type="synonym">Rotavirus A (strain FI14)</name>
    <dbReference type="NCBI Taxonomy" id="36442"/>
    <lineage>
        <taxon>Viruses</taxon>
        <taxon>Riboviria</taxon>
        <taxon>Orthornavirae</taxon>
        <taxon>Duplornaviricota</taxon>
        <taxon>Resentoviricetes</taxon>
        <taxon>Reovirales</taxon>
        <taxon>Sedoreoviridae</taxon>
        <taxon>Rotavirus</taxon>
        <taxon>Equine rotavirus</taxon>
    </lineage>
</organism>
<name>VP6_ROTE1</name>
<proteinExistence type="evidence at transcript level"/>
<evidence type="ECO:0000255" key="1">
    <source>
        <dbReference type="HAMAP-Rule" id="MF_04129"/>
    </source>
</evidence>
<keyword id="KW-0106">Calcium</keyword>
<keyword id="KW-0167">Capsid protein</keyword>
<keyword id="KW-1154">Intermediate capsid protein</keyword>
<keyword id="KW-0479">Metal-binding</keyword>
<keyword id="KW-0832">Ubl conjugation</keyword>
<keyword id="KW-0946">Virion</keyword>
<keyword id="KW-0862">Zinc</keyword>
<reference key="1">
    <citation type="journal article" date="1988" name="J. Gen. Virol.">
        <title>Comparative sequence analysis of the genomic segment 6 of four rotaviruses each with a different subgroup specificity.</title>
        <authorList>
            <person name="Gorziglia M."/>
            <person name="Hoshino Y."/>
            <person name="Nishikawa K."/>
            <person name="Maloy W.L."/>
            <person name="Jones R.W."/>
            <person name="Kapikian A.Z."/>
            <person name="Chanock R.M."/>
        </authorList>
    </citation>
    <scope>NUCLEOTIDE SEQUENCE [MRNA]</scope>
</reference>
<organismHost>
    <name type="scientific">Equus caballus</name>
    <name type="common">Horse</name>
    <dbReference type="NCBI Taxonomy" id="9796"/>
</organismHost>
<feature type="chain" id="PRO_0000149564" description="Intermediate capsid protein VP6">
    <location>
        <begin position="1"/>
        <end position="397"/>
    </location>
</feature>
<feature type="region of interest" description="Interaction with the inner capsid protein VP2" evidence="1">
    <location>
        <begin position="62"/>
        <end position="73"/>
    </location>
</feature>
<feature type="binding site" evidence="1">
    <location>
        <position position="153"/>
    </location>
    <ligand>
        <name>Zn(2+)</name>
        <dbReference type="ChEBI" id="CHEBI:29105"/>
        <note>ligand shared between all trimeric partners</note>
    </ligand>
</feature>
<feature type="binding site" evidence="1">
    <location>
        <position position="266"/>
    </location>
    <ligand>
        <name>Ca(2+)</name>
        <dbReference type="ChEBI" id="CHEBI:29108"/>
    </ligand>
</feature>
<feature type="binding site" evidence="1">
    <location>
        <position position="286"/>
    </location>
    <ligand>
        <name>Ca(2+)</name>
        <dbReference type="ChEBI" id="CHEBI:29108"/>
    </ligand>
</feature>
<dbReference type="EMBL" id="D00323">
    <property type="protein sequence ID" value="BAA00235.1"/>
    <property type="molecule type" value="mRNA"/>
</dbReference>
<dbReference type="SMR" id="P16592"/>
<dbReference type="GO" id="GO:0019031">
    <property type="term" value="C:viral envelope"/>
    <property type="evidence" value="ECO:0007669"/>
    <property type="project" value="UniProtKB-UniRule"/>
</dbReference>
<dbReference type="GO" id="GO:0039626">
    <property type="term" value="C:viral intermediate capsid"/>
    <property type="evidence" value="ECO:0007669"/>
    <property type="project" value="UniProtKB-UniRule"/>
</dbReference>
<dbReference type="GO" id="GO:0046789">
    <property type="term" value="F:host cell surface receptor binding"/>
    <property type="evidence" value="ECO:0007669"/>
    <property type="project" value="UniProtKB-UniRule"/>
</dbReference>
<dbReference type="GO" id="GO:0046872">
    <property type="term" value="F:metal ion binding"/>
    <property type="evidence" value="ECO:0007669"/>
    <property type="project" value="UniProtKB-UniRule"/>
</dbReference>
<dbReference type="GO" id="GO:0005198">
    <property type="term" value="F:structural molecule activity"/>
    <property type="evidence" value="ECO:0007669"/>
    <property type="project" value="UniProtKB-UniRule"/>
</dbReference>
<dbReference type="GO" id="GO:0019064">
    <property type="term" value="P:fusion of virus membrane with host plasma membrane"/>
    <property type="evidence" value="ECO:0007669"/>
    <property type="project" value="UniProtKB-UniRule"/>
</dbReference>
<dbReference type="FunFam" id="2.60.120.170:FF:000001">
    <property type="entry name" value="Intermediate capsid protein VP6"/>
    <property type="match status" value="1"/>
</dbReference>
<dbReference type="Gene3D" id="2.60.120.170">
    <property type="match status" value="1"/>
</dbReference>
<dbReference type="Gene3D" id="1.10.1350.10">
    <property type="entry name" value="Viral capsid alpha domain"/>
    <property type="match status" value="1"/>
</dbReference>
<dbReference type="HAMAP" id="MF_04126">
    <property type="entry name" value="Rota_VP6"/>
    <property type="match status" value="1"/>
</dbReference>
<dbReference type="HAMAP" id="MF_04129">
    <property type="entry name" value="Rota_VP6_A"/>
    <property type="match status" value="1"/>
</dbReference>
<dbReference type="InterPro" id="IPR008980">
    <property type="entry name" value="Capsid_hemagglutn"/>
</dbReference>
<dbReference type="InterPro" id="IPR001385">
    <property type="entry name" value="Rotavirus_A/C_VP6"/>
</dbReference>
<dbReference type="InterPro" id="IPR008935">
    <property type="entry name" value="Virus_capsid_a-hlx_vir"/>
</dbReference>
<dbReference type="Pfam" id="PF00980">
    <property type="entry name" value="Rota_Capsid_VP6"/>
    <property type="match status" value="1"/>
</dbReference>
<dbReference type="SUPFAM" id="SSF48345">
    <property type="entry name" value="A virus capsid protein alpha-helical domain"/>
    <property type="match status" value="1"/>
</dbReference>
<dbReference type="SUPFAM" id="SSF49818">
    <property type="entry name" value="Viral protein domain"/>
    <property type="match status" value="1"/>
</dbReference>